<feature type="initiator methionine" description="Removed" evidence="2 3 4">
    <location>
        <position position="1"/>
    </location>
</feature>
<feature type="chain" id="PRO_0000076745" description="3-isopropylmalate dehydratase large subunit">
    <location>
        <begin position="2"/>
        <end position="466"/>
    </location>
</feature>
<feature type="binding site" evidence="1">
    <location>
        <position position="347"/>
    </location>
    <ligand>
        <name>[4Fe-4S] cluster</name>
        <dbReference type="ChEBI" id="CHEBI:49883"/>
    </ligand>
</feature>
<feature type="binding site" evidence="1">
    <location>
        <position position="407"/>
    </location>
    <ligand>
        <name>[4Fe-4S] cluster</name>
        <dbReference type="ChEBI" id="CHEBI:49883"/>
    </ligand>
</feature>
<feature type="binding site" evidence="1">
    <location>
        <position position="410"/>
    </location>
    <ligand>
        <name>[4Fe-4S] cluster</name>
        <dbReference type="ChEBI" id="CHEBI:49883"/>
    </ligand>
</feature>
<feature type="sequence conflict" description="In Ref. 5; BAA21004/BAA21005." evidence="5" ref="5">
    <original>A</original>
    <variation>G</variation>
    <location>
        <position position="74"/>
    </location>
</feature>
<comment type="function">
    <text>Catalyzes the isomerization between 2-isopropylmalate and 3-isopropylmalate, via the formation of 2-isopropylmaleate.</text>
</comment>
<comment type="catalytic activity">
    <reaction evidence="1">
        <text>(2R,3S)-3-isopropylmalate = (2S)-2-isopropylmalate</text>
        <dbReference type="Rhea" id="RHEA:32287"/>
        <dbReference type="ChEBI" id="CHEBI:1178"/>
        <dbReference type="ChEBI" id="CHEBI:35121"/>
        <dbReference type="EC" id="4.2.1.33"/>
    </reaction>
</comment>
<comment type="cofactor">
    <cofactor evidence="1">
        <name>[4Fe-4S] cluster</name>
        <dbReference type="ChEBI" id="CHEBI:49883"/>
    </cofactor>
    <text evidence="1">Binds 1 [4Fe-4S] cluster per subunit.</text>
</comment>
<comment type="pathway">
    <text evidence="1">Amino-acid biosynthesis; L-leucine biosynthesis; L-leucine from 3-methyl-2-oxobutanoate: step 2/4.</text>
</comment>
<comment type="subunit">
    <text evidence="1">Heterodimer of LeuC and LeuD.</text>
</comment>
<comment type="interaction">
    <interactant intactId="EBI-1113576">
        <id>P0A6A6</id>
    </interactant>
    <interactant intactId="EBI-1113528">
        <id>P30126</id>
        <label>leuD</label>
    </interactant>
    <organismsDiffer>false</organismsDiffer>
    <experiments>4</experiments>
</comment>
<comment type="similarity">
    <text evidence="1">Belongs to the aconitase/IPM isomerase family. LeuC type 1 subfamily.</text>
</comment>
<dbReference type="EC" id="4.2.1.33" evidence="1"/>
<dbReference type="EMBL" id="U00096">
    <property type="protein sequence ID" value="AAC73183.1"/>
    <property type="molecule type" value="Genomic_DNA"/>
</dbReference>
<dbReference type="EMBL" id="AP009048">
    <property type="protein sequence ID" value="BAB96641.2"/>
    <property type="molecule type" value="Genomic_DNA"/>
</dbReference>
<dbReference type="EMBL" id="D17631">
    <property type="protein sequence ID" value="BAA21004.1"/>
    <property type="molecule type" value="Genomic_DNA"/>
</dbReference>
<dbReference type="EMBL" id="D17632">
    <property type="protein sequence ID" value="BAA21005.1"/>
    <property type="molecule type" value="Genomic_DNA"/>
</dbReference>
<dbReference type="PIR" id="H64728">
    <property type="entry name" value="H64728"/>
</dbReference>
<dbReference type="RefSeq" id="NP_414614.1">
    <property type="nucleotide sequence ID" value="NC_000913.3"/>
</dbReference>
<dbReference type="RefSeq" id="WP_001140652.1">
    <property type="nucleotide sequence ID" value="NZ_STEB01000010.1"/>
</dbReference>
<dbReference type="SMR" id="P0A6A6"/>
<dbReference type="BioGRID" id="4262050">
    <property type="interactions" value="16"/>
</dbReference>
<dbReference type="BioGRID" id="849465">
    <property type="interactions" value="1"/>
</dbReference>
<dbReference type="ComplexPortal" id="CPX-5159">
    <property type="entry name" value="3-isopropylmalate dehydratase complex"/>
</dbReference>
<dbReference type="DIP" id="DIP-35834N"/>
<dbReference type="FunCoup" id="P0A6A6">
    <property type="interactions" value="747"/>
</dbReference>
<dbReference type="IntAct" id="P0A6A6">
    <property type="interactions" value="3"/>
</dbReference>
<dbReference type="STRING" id="511145.b0072"/>
<dbReference type="jPOST" id="P0A6A6"/>
<dbReference type="PaxDb" id="511145-b0072"/>
<dbReference type="EnsemblBacteria" id="AAC73183">
    <property type="protein sequence ID" value="AAC73183"/>
    <property type="gene ID" value="b0072"/>
</dbReference>
<dbReference type="GeneID" id="75202111"/>
<dbReference type="GeneID" id="945076"/>
<dbReference type="KEGG" id="ecj:JW0071"/>
<dbReference type="KEGG" id="eco:b0072"/>
<dbReference type="PATRIC" id="fig|1411691.4.peg.2209"/>
<dbReference type="EchoBASE" id="EB1536"/>
<dbReference type="eggNOG" id="COG0065">
    <property type="taxonomic scope" value="Bacteria"/>
</dbReference>
<dbReference type="HOGENOM" id="CLU_006714_3_4_6"/>
<dbReference type="InParanoid" id="P0A6A6"/>
<dbReference type="OMA" id="WDDHVVR"/>
<dbReference type="OrthoDB" id="9802769at2"/>
<dbReference type="PhylomeDB" id="P0A6A6"/>
<dbReference type="BioCyc" id="EcoCyc:LEUC-MONOMER"/>
<dbReference type="BioCyc" id="MetaCyc:LEUC-MONOMER"/>
<dbReference type="UniPathway" id="UPA00048">
    <property type="reaction ID" value="UER00071"/>
</dbReference>
<dbReference type="PRO" id="PR:P0A6A6"/>
<dbReference type="Proteomes" id="UP000000625">
    <property type="component" value="Chromosome"/>
</dbReference>
<dbReference type="GO" id="GO:0009316">
    <property type="term" value="C:3-isopropylmalate dehydratase complex"/>
    <property type="evidence" value="ECO:0000269"/>
    <property type="project" value="EcoCyc"/>
</dbReference>
<dbReference type="GO" id="GO:0005829">
    <property type="term" value="C:cytosol"/>
    <property type="evidence" value="ECO:0000314"/>
    <property type="project" value="EcoCyc"/>
</dbReference>
<dbReference type="GO" id="GO:0003861">
    <property type="term" value="F:3-isopropylmalate dehydratase activity"/>
    <property type="evidence" value="ECO:0007669"/>
    <property type="project" value="UniProtKB-UniRule"/>
</dbReference>
<dbReference type="GO" id="GO:0051539">
    <property type="term" value="F:4 iron, 4 sulfur cluster binding"/>
    <property type="evidence" value="ECO:0000305"/>
    <property type="project" value="EcoCyc"/>
</dbReference>
<dbReference type="GO" id="GO:0046872">
    <property type="term" value="F:metal ion binding"/>
    <property type="evidence" value="ECO:0007669"/>
    <property type="project" value="UniProtKB-KW"/>
</dbReference>
<dbReference type="GO" id="GO:0009098">
    <property type="term" value="P:L-leucine biosynthetic process"/>
    <property type="evidence" value="ECO:0000315"/>
    <property type="project" value="EcoCyc"/>
</dbReference>
<dbReference type="CDD" id="cd01583">
    <property type="entry name" value="IPMI"/>
    <property type="match status" value="1"/>
</dbReference>
<dbReference type="FunFam" id="3.30.499.10:FF:000006">
    <property type="entry name" value="3-isopropylmalate dehydratase large subunit"/>
    <property type="match status" value="1"/>
</dbReference>
<dbReference type="FunFam" id="3.30.499.10:FF:000007">
    <property type="entry name" value="3-isopropylmalate dehydratase large subunit"/>
    <property type="match status" value="1"/>
</dbReference>
<dbReference type="Gene3D" id="3.30.499.10">
    <property type="entry name" value="Aconitase, domain 3"/>
    <property type="match status" value="2"/>
</dbReference>
<dbReference type="HAMAP" id="MF_01026">
    <property type="entry name" value="LeuC_type1"/>
    <property type="match status" value="1"/>
</dbReference>
<dbReference type="InterPro" id="IPR004430">
    <property type="entry name" value="3-IsopropMal_deHydase_lsu"/>
</dbReference>
<dbReference type="InterPro" id="IPR015931">
    <property type="entry name" value="Acnase/IPM_dHydase_lsu_aba_1/3"/>
</dbReference>
<dbReference type="InterPro" id="IPR001030">
    <property type="entry name" value="Acoase/IPM_deHydtase_lsu_aba"/>
</dbReference>
<dbReference type="InterPro" id="IPR018136">
    <property type="entry name" value="Aconitase_4Fe-4S_BS"/>
</dbReference>
<dbReference type="InterPro" id="IPR036008">
    <property type="entry name" value="Aconitase_4Fe-4S_dom"/>
</dbReference>
<dbReference type="InterPro" id="IPR050067">
    <property type="entry name" value="IPM_dehydratase_rel_enz"/>
</dbReference>
<dbReference type="InterPro" id="IPR033941">
    <property type="entry name" value="IPMI_cat"/>
</dbReference>
<dbReference type="NCBIfam" id="TIGR00170">
    <property type="entry name" value="leuC"/>
    <property type="match status" value="1"/>
</dbReference>
<dbReference type="NCBIfam" id="NF004016">
    <property type="entry name" value="PRK05478.1"/>
    <property type="match status" value="1"/>
</dbReference>
<dbReference type="NCBIfam" id="NF009116">
    <property type="entry name" value="PRK12466.1"/>
    <property type="match status" value="1"/>
</dbReference>
<dbReference type="PANTHER" id="PTHR43822:SF9">
    <property type="entry name" value="3-ISOPROPYLMALATE DEHYDRATASE"/>
    <property type="match status" value="1"/>
</dbReference>
<dbReference type="PANTHER" id="PTHR43822">
    <property type="entry name" value="HOMOACONITASE, MITOCHONDRIAL-RELATED"/>
    <property type="match status" value="1"/>
</dbReference>
<dbReference type="Pfam" id="PF00330">
    <property type="entry name" value="Aconitase"/>
    <property type="match status" value="1"/>
</dbReference>
<dbReference type="PRINTS" id="PR00415">
    <property type="entry name" value="ACONITASE"/>
</dbReference>
<dbReference type="SUPFAM" id="SSF53732">
    <property type="entry name" value="Aconitase iron-sulfur domain"/>
    <property type="match status" value="1"/>
</dbReference>
<dbReference type="PROSITE" id="PS00450">
    <property type="entry name" value="ACONITASE_1"/>
    <property type="match status" value="1"/>
</dbReference>
<dbReference type="PROSITE" id="PS01244">
    <property type="entry name" value="ACONITASE_2"/>
    <property type="match status" value="1"/>
</dbReference>
<sequence length="466" mass="49882">MAKTLYEKLFDAHVVYEAENETPLLYIDRHLVHEVTSPQAFDGLRAHGRPVRQPGKTFATMDHNVSTQTKDINACGEMARIQMQELIKNCKEFGVELYDLNHPYQGIVHVMGPEQGVTLPGMTIVCGDSHTATHGAFGALAFGIGTSEVEHVLATQTLKQGRAKTMKIEVQGKAAPGITAKDIVLAIIGKTGSAGGTGHVVEFCGEAIRDLSMEGRMTLCNMAIEMGAKAGLVAPDETTFNYVKGRLHAPKGKDFDDAVAYWKTLQTDEGATFDTVVTLQAEEISPQVTWGTNPGQVISVNDNIPDPASFADPVERASAEKALAYMGLKPGIPLTEVAIDKVFIGSCTNSRIEDLRAAAEIAKGRKVAPGVQALVVPGSGPVKAQAEAEGLDKIFIEAGFEWRLPGCSMCLAMNNDRLNPGERCASTSNRNFEGRQGRGGRTHLVSPAMAAAAAVTGHFADIRNIK</sequence>
<evidence type="ECO:0000255" key="1">
    <source>
        <dbReference type="HAMAP-Rule" id="MF_01026"/>
    </source>
</evidence>
<evidence type="ECO:0000269" key="2">
    <source>
    </source>
</evidence>
<evidence type="ECO:0000269" key="3">
    <source>
    </source>
</evidence>
<evidence type="ECO:0000269" key="4">
    <source>
    </source>
</evidence>
<evidence type="ECO:0000305" key="5"/>
<proteinExistence type="evidence at protein level"/>
<protein>
    <recommendedName>
        <fullName evidence="1">3-isopropylmalate dehydratase large subunit</fullName>
        <ecNumber evidence="1">4.2.1.33</ecNumber>
    </recommendedName>
    <alternativeName>
        <fullName evidence="1">Alpha-IPM isomerase</fullName>
        <shortName evidence="1">IPMI</shortName>
    </alternativeName>
    <alternativeName>
        <fullName evidence="1">Isopropylmalate isomerase</fullName>
    </alternativeName>
</protein>
<gene>
    <name evidence="1" type="primary">leuC</name>
    <name type="ordered locus">b0072</name>
    <name type="ordered locus">JW0071</name>
</gene>
<keyword id="KW-0004">4Fe-4S</keyword>
<keyword id="KW-0028">Amino-acid biosynthesis</keyword>
<keyword id="KW-0100">Branched-chain amino acid biosynthesis</keyword>
<keyword id="KW-0903">Direct protein sequencing</keyword>
<keyword id="KW-0408">Iron</keyword>
<keyword id="KW-0411">Iron-sulfur</keyword>
<keyword id="KW-0432">Leucine biosynthesis</keyword>
<keyword id="KW-0456">Lyase</keyword>
<keyword id="KW-0479">Metal-binding</keyword>
<keyword id="KW-1185">Reference proteome</keyword>
<name>LEUC_ECOLI</name>
<organism>
    <name type="scientific">Escherichia coli (strain K12)</name>
    <dbReference type="NCBI Taxonomy" id="83333"/>
    <lineage>
        <taxon>Bacteria</taxon>
        <taxon>Pseudomonadati</taxon>
        <taxon>Pseudomonadota</taxon>
        <taxon>Gammaproteobacteria</taxon>
        <taxon>Enterobacterales</taxon>
        <taxon>Enterobacteriaceae</taxon>
        <taxon>Escherichia</taxon>
    </lineage>
</organism>
<accession>P0A6A6</accession>
<accession>P30127</accession>
<accession>P78042</accession>
<accession>Q8FL77</accession>
<reference key="1">
    <citation type="journal article" date="1990" name="Nucleic Acids Res.">
        <title>Aphidicolin inhibits DNA polymerase II of Escherichia coli, an alpha-like DNA polymerase.</title>
        <authorList>
            <person name="Rosenthal E.R."/>
            <person name="Calvo J.M."/>
        </authorList>
    </citation>
    <scope>NUCLEOTIDE SEQUENCE [GENOMIC DNA]</scope>
</reference>
<reference key="2">
    <citation type="journal article" date="1992" name="Nucleic Acids Res.">
        <title>Systematic sequencing of the Escherichia coli genome: analysis of the 0-2.4 min region.</title>
        <authorList>
            <person name="Yura T."/>
            <person name="Mori H."/>
            <person name="Nagai H."/>
            <person name="Nagata T."/>
            <person name="Ishihama A."/>
            <person name="Fujita N."/>
            <person name="Isono K."/>
            <person name="Mizobuchi K."/>
            <person name="Nakata A."/>
        </authorList>
    </citation>
    <scope>NUCLEOTIDE SEQUENCE [LARGE SCALE GENOMIC DNA]</scope>
    <source>
        <strain>K12</strain>
    </source>
</reference>
<reference key="3">
    <citation type="journal article" date="1997" name="Science">
        <title>The complete genome sequence of Escherichia coli K-12.</title>
        <authorList>
            <person name="Blattner F.R."/>
            <person name="Plunkett G. III"/>
            <person name="Bloch C.A."/>
            <person name="Perna N.T."/>
            <person name="Burland V."/>
            <person name="Riley M."/>
            <person name="Collado-Vides J."/>
            <person name="Glasner J.D."/>
            <person name="Rode C.K."/>
            <person name="Mayhew G.F."/>
            <person name="Gregor J."/>
            <person name="Davis N.W."/>
            <person name="Kirkpatrick H.A."/>
            <person name="Goeden M.A."/>
            <person name="Rose D.J."/>
            <person name="Mau B."/>
            <person name="Shao Y."/>
        </authorList>
    </citation>
    <scope>NUCLEOTIDE SEQUENCE [LARGE SCALE GENOMIC DNA]</scope>
    <source>
        <strain>K12 / MG1655 / ATCC 47076</strain>
    </source>
</reference>
<reference key="4">
    <citation type="journal article" date="2006" name="Mol. Syst. Biol.">
        <title>Highly accurate genome sequences of Escherichia coli K-12 strains MG1655 and W3110.</title>
        <authorList>
            <person name="Hayashi K."/>
            <person name="Morooka N."/>
            <person name="Yamamoto Y."/>
            <person name="Fujita K."/>
            <person name="Isono K."/>
            <person name="Choi S."/>
            <person name="Ohtsubo E."/>
            <person name="Baba T."/>
            <person name="Wanner B.L."/>
            <person name="Mori H."/>
            <person name="Horiuchi T."/>
        </authorList>
    </citation>
    <scope>NUCLEOTIDE SEQUENCE [LARGE SCALE GENOMIC DNA]</scope>
    <scope>SEQUENCE REVISION TO 70 AND 361</scope>
    <source>
        <strain>K12 / W3110 / ATCC 27325 / DSM 5911</strain>
    </source>
</reference>
<reference key="5">
    <citation type="journal article" date="1994" name="Eur. J. Biochem.">
        <title>Hydrophobic interaction at the subunit interface contributes to the thermostability of 3-isopropylmalate dehydrogenase from an extreme thermophile, Thermus thermophilus.</title>
        <authorList>
            <person name="Kirino H."/>
            <person name="Aoki M."/>
            <person name="Aoshima M."/>
            <person name="Hayashi Y."/>
            <person name="Ohba M."/>
            <person name="Yamagishi A."/>
            <person name="Wakagi T."/>
            <person name="Oshima T."/>
        </authorList>
    </citation>
    <scope>NUCLEOTIDE SEQUENCE [GENOMIC DNA] OF 1-205</scope>
    <source>
        <strain>K12</strain>
    </source>
</reference>
<reference key="6">
    <citation type="journal article" date="1997" name="Electrophoresis">
        <title>Comparing the predicted and observed properties of proteins encoded in the genome of Escherichia coli K-12.</title>
        <authorList>
            <person name="Link A.J."/>
            <person name="Robison K."/>
            <person name="Church G.M."/>
        </authorList>
    </citation>
    <scope>PROTEIN SEQUENCE OF 2-13</scope>
    <source>
        <strain>K12 / EMG2</strain>
    </source>
</reference>
<reference key="7">
    <citation type="journal article" date="1998" name="Electrophoresis">
        <title>'98 Escherichia coli SWISS-2DPAGE database update.</title>
        <authorList>
            <person name="Tonella L."/>
            <person name="Walsh B.J."/>
            <person name="Sanchez J.-C."/>
            <person name="Ou K."/>
            <person name="Wilkins M.R."/>
            <person name="Tyler M."/>
            <person name="Frutiger S."/>
            <person name="Gooley A.A."/>
            <person name="Pescaru I."/>
            <person name="Appel R.D."/>
            <person name="Yan J.X."/>
            <person name="Bairoch A."/>
            <person name="Hoogland C."/>
            <person name="Morch F.S."/>
            <person name="Hughes G.J."/>
            <person name="Williams K.L."/>
            <person name="Hochstrasser D.F."/>
        </authorList>
    </citation>
    <scope>PROTEIN SEQUENCE OF 2-5</scope>
    <source>
        <strain>K12 / W3110 / ATCC 27325 / DSM 5911</strain>
    </source>
</reference>
<reference key="8">
    <citation type="journal article" date="1998" name="J. Mol. Biol.">
        <title>Protein identification with N and C-terminal sequence tags in proteome projects.</title>
        <authorList>
            <person name="Wilkins M.R."/>
            <person name="Gasteiger E."/>
            <person name="Tonella L."/>
            <person name="Ou K."/>
            <person name="Tyler M."/>
            <person name="Sanchez J.-C."/>
            <person name="Gooley A.A."/>
            <person name="Walsh B.J."/>
            <person name="Bairoch A."/>
            <person name="Appel R.D."/>
            <person name="Williams K.L."/>
            <person name="Hochstrasser D.F."/>
        </authorList>
    </citation>
    <scope>PROTEIN SEQUENCE OF 2-5</scope>
    <source>
        <strain>K12 / W3110 / ATCC 27325 / DSM 5911</strain>
    </source>
</reference>